<dbReference type="EMBL" id="AE017126">
    <property type="protein sequence ID" value="AAQ00743.1"/>
    <property type="molecule type" value="Genomic_DNA"/>
</dbReference>
<dbReference type="RefSeq" id="NP_876090.1">
    <property type="nucleotide sequence ID" value="NC_005042.1"/>
</dbReference>
<dbReference type="RefSeq" id="WP_011125848.1">
    <property type="nucleotide sequence ID" value="NC_005042.1"/>
</dbReference>
<dbReference type="SMR" id="Q7V9X5"/>
<dbReference type="STRING" id="167539.Pro_1699"/>
<dbReference type="EnsemblBacteria" id="AAQ00743">
    <property type="protein sequence ID" value="AAQ00743"/>
    <property type="gene ID" value="Pro_1699"/>
</dbReference>
<dbReference type="KEGG" id="pma:Pro_1699"/>
<dbReference type="PATRIC" id="fig|167539.5.peg.1794"/>
<dbReference type="eggNOG" id="COG0096">
    <property type="taxonomic scope" value="Bacteria"/>
</dbReference>
<dbReference type="HOGENOM" id="CLU_098428_0_2_3"/>
<dbReference type="OrthoDB" id="9802617at2"/>
<dbReference type="Proteomes" id="UP000001420">
    <property type="component" value="Chromosome"/>
</dbReference>
<dbReference type="GO" id="GO:1990904">
    <property type="term" value="C:ribonucleoprotein complex"/>
    <property type="evidence" value="ECO:0007669"/>
    <property type="project" value="UniProtKB-KW"/>
</dbReference>
<dbReference type="GO" id="GO:0005840">
    <property type="term" value="C:ribosome"/>
    <property type="evidence" value="ECO:0007669"/>
    <property type="project" value="UniProtKB-KW"/>
</dbReference>
<dbReference type="GO" id="GO:0019843">
    <property type="term" value="F:rRNA binding"/>
    <property type="evidence" value="ECO:0007669"/>
    <property type="project" value="UniProtKB-UniRule"/>
</dbReference>
<dbReference type="GO" id="GO:0003735">
    <property type="term" value="F:structural constituent of ribosome"/>
    <property type="evidence" value="ECO:0007669"/>
    <property type="project" value="InterPro"/>
</dbReference>
<dbReference type="GO" id="GO:0006412">
    <property type="term" value="P:translation"/>
    <property type="evidence" value="ECO:0007669"/>
    <property type="project" value="UniProtKB-UniRule"/>
</dbReference>
<dbReference type="FunFam" id="3.30.1370.30:FF:000002">
    <property type="entry name" value="30S ribosomal protein S8"/>
    <property type="match status" value="1"/>
</dbReference>
<dbReference type="FunFam" id="3.30.1490.10:FF:000001">
    <property type="entry name" value="30S ribosomal protein S8"/>
    <property type="match status" value="1"/>
</dbReference>
<dbReference type="Gene3D" id="3.30.1370.30">
    <property type="match status" value="1"/>
</dbReference>
<dbReference type="Gene3D" id="3.30.1490.10">
    <property type="match status" value="1"/>
</dbReference>
<dbReference type="HAMAP" id="MF_01302_B">
    <property type="entry name" value="Ribosomal_uS8_B"/>
    <property type="match status" value="1"/>
</dbReference>
<dbReference type="InterPro" id="IPR000630">
    <property type="entry name" value="Ribosomal_uS8"/>
</dbReference>
<dbReference type="InterPro" id="IPR047863">
    <property type="entry name" value="Ribosomal_uS8_CS"/>
</dbReference>
<dbReference type="InterPro" id="IPR035987">
    <property type="entry name" value="Ribosomal_uS8_sf"/>
</dbReference>
<dbReference type="NCBIfam" id="NF001109">
    <property type="entry name" value="PRK00136.1"/>
    <property type="match status" value="1"/>
</dbReference>
<dbReference type="PANTHER" id="PTHR11758">
    <property type="entry name" value="40S RIBOSOMAL PROTEIN S15A"/>
    <property type="match status" value="1"/>
</dbReference>
<dbReference type="Pfam" id="PF00410">
    <property type="entry name" value="Ribosomal_S8"/>
    <property type="match status" value="1"/>
</dbReference>
<dbReference type="SUPFAM" id="SSF56047">
    <property type="entry name" value="Ribosomal protein S8"/>
    <property type="match status" value="1"/>
</dbReference>
<dbReference type="PROSITE" id="PS00053">
    <property type="entry name" value="RIBOSOMAL_S8"/>
    <property type="match status" value="1"/>
</dbReference>
<organism>
    <name type="scientific">Prochlorococcus marinus (strain SARG / CCMP1375 / SS120)</name>
    <dbReference type="NCBI Taxonomy" id="167539"/>
    <lineage>
        <taxon>Bacteria</taxon>
        <taxon>Bacillati</taxon>
        <taxon>Cyanobacteriota</taxon>
        <taxon>Cyanophyceae</taxon>
        <taxon>Synechococcales</taxon>
        <taxon>Prochlorococcaceae</taxon>
        <taxon>Prochlorococcus</taxon>
    </lineage>
</organism>
<sequence length="133" mass="14787">MANHDPISDMLTRIRNASQKRHENTRIPASRMSRSIAKVLQNEGFISQVSEEGEGVKTQLVLELKYSGKHRHPTIRSMKRVSKPGLRIYKNNRGLPKVLGGLGVAIISTSKGVMSDRDARKQGVGGEVLCYVY</sequence>
<keyword id="KW-1185">Reference proteome</keyword>
<keyword id="KW-0687">Ribonucleoprotein</keyword>
<keyword id="KW-0689">Ribosomal protein</keyword>
<keyword id="KW-0694">RNA-binding</keyword>
<keyword id="KW-0699">rRNA-binding</keyword>
<comment type="function">
    <text evidence="1">One of the primary rRNA binding proteins, it binds directly to 16S rRNA central domain where it helps coordinate assembly of the platform of the 30S subunit.</text>
</comment>
<comment type="subunit">
    <text evidence="1">Part of the 30S ribosomal subunit. Contacts proteins S5 and S12.</text>
</comment>
<comment type="similarity">
    <text evidence="1">Belongs to the universal ribosomal protein uS8 family.</text>
</comment>
<proteinExistence type="inferred from homology"/>
<reference key="1">
    <citation type="journal article" date="2003" name="Proc. Natl. Acad. Sci. U.S.A.">
        <title>Genome sequence of the cyanobacterium Prochlorococcus marinus SS120, a nearly minimal oxyphototrophic genome.</title>
        <authorList>
            <person name="Dufresne A."/>
            <person name="Salanoubat M."/>
            <person name="Partensky F."/>
            <person name="Artiguenave F."/>
            <person name="Axmann I.M."/>
            <person name="Barbe V."/>
            <person name="Duprat S."/>
            <person name="Galperin M.Y."/>
            <person name="Koonin E.V."/>
            <person name="Le Gall F."/>
            <person name="Makarova K.S."/>
            <person name="Ostrowski M."/>
            <person name="Oztas S."/>
            <person name="Robert C."/>
            <person name="Rogozin I.B."/>
            <person name="Scanlan D.J."/>
            <person name="Tandeau de Marsac N."/>
            <person name="Weissenbach J."/>
            <person name="Wincker P."/>
            <person name="Wolf Y.I."/>
            <person name="Hess W.R."/>
        </authorList>
    </citation>
    <scope>NUCLEOTIDE SEQUENCE [LARGE SCALE GENOMIC DNA]</scope>
    <source>
        <strain>SARG / CCMP1375 / SS120</strain>
    </source>
</reference>
<accession>Q7V9X5</accession>
<evidence type="ECO:0000255" key="1">
    <source>
        <dbReference type="HAMAP-Rule" id="MF_01302"/>
    </source>
</evidence>
<evidence type="ECO:0000305" key="2"/>
<name>RS8_PROMA</name>
<feature type="chain" id="PRO_0000126463" description="Small ribosomal subunit protein uS8">
    <location>
        <begin position="1"/>
        <end position="133"/>
    </location>
</feature>
<protein>
    <recommendedName>
        <fullName evidence="1">Small ribosomal subunit protein uS8</fullName>
    </recommendedName>
    <alternativeName>
        <fullName evidence="2">30S ribosomal protein S8</fullName>
    </alternativeName>
</protein>
<gene>
    <name evidence="1" type="primary">rpsH</name>
    <name evidence="1" type="synonym">rps8</name>
    <name type="ordered locus">Pro_1699</name>
</gene>